<feature type="chain" id="PRO_1000066725" description="Uracil phosphoribosyltransferase">
    <location>
        <begin position="1"/>
        <end position="209"/>
    </location>
</feature>
<feature type="binding site" evidence="1">
    <location>
        <position position="79"/>
    </location>
    <ligand>
        <name>5-phospho-alpha-D-ribose 1-diphosphate</name>
        <dbReference type="ChEBI" id="CHEBI:58017"/>
    </ligand>
</feature>
<feature type="binding site" evidence="1">
    <location>
        <position position="104"/>
    </location>
    <ligand>
        <name>5-phospho-alpha-D-ribose 1-diphosphate</name>
        <dbReference type="ChEBI" id="CHEBI:58017"/>
    </ligand>
</feature>
<feature type="binding site" evidence="1">
    <location>
        <begin position="131"/>
        <end position="139"/>
    </location>
    <ligand>
        <name>5-phospho-alpha-D-ribose 1-diphosphate</name>
        <dbReference type="ChEBI" id="CHEBI:58017"/>
    </ligand>
</feature>
<feature type="binding site" evidence="1">
    <location>
        <position position="194"/>
    </location>
    <ligand>
        <name>uracil</name>
        <dbReference type="ChEBI" id="CHEBI:17568"/>
    </ligand>
</feature>
<feature type="binding site" evidence="1">
    <location>
        <begin position="199"/>
        <end position="201"/>
    </location>
    <ligand>
        <name>uracil</name>
        <dbReference type="ChEBI" id="CHEBI:17568"/>
    </ligand>
</feature>
<feature type="binding site" evidence="1">
    <location>
        <position position="200"/>
    </location>
    <ligand>
        <name>5-phospho-alpha-D-ribose 1-diphosphate</name>
        <dbReference type="ChEBI" id="CHEBI:58017"/>
    </ligand>
</feature>
<proteinExistence type="inferred from homology"/>
<protein>
    <recommendedName>
        <fullName evidence="1">Uracil phosphoribosyltransferase</fullName>
        <ecNumber evidence="1">2.4.2.9</ecNumber>
    </recommendedName>
    <alternativeName>
        <fullName evidence="1">UMP pyrophosphorylase</fullName>
    </alternativeName>
    <alternativeName>
        <fullName evidence="1">UPRTase</fullName>
    </alternativeName>
</protein>
<sequence>MSKVFVIDHPLIQHKLTLIRDKNTGSKDFRDLVKEISLLMGYEVTRNLSLQEIEIETPVGVTKSKVISGRKLGIVPILRAGLGMVDGILQLIPAAKVGHVGLYRDPETLEPVEYYCKLPVDVQEREIIVLDPMLATGGSANATLKAIKDRGVANMKLVCIVSCPEGIAAVQKAHPDVDIYVAAIDEKLNDHAYIVPGLGDAGDRLFGTK</sequence>
<accession>A6TK51</accession>
<organism>
    <name type="scientific">Alkaliphilus metalliredigens (strain QYMF)</name>
    <dbReference type="NCBI Taxonomy" id="293826"/>
    <lineage>
        <taxon>Bacteria</taxon>
        <taxon>Bacillati</taxon>
        <taxon>Bacillota</taxon>
        <taxon>Clostridia</taxon>
        <taxon>Peptostreptococcales</taxon>
        <taxon>Natronincolaceae</taxon>
        <taxon>Alkaliphilus</taxon>
    </lineage>
</organism>
<keyword id="KW-0021">Allosteric enzyme</keyword>
<keyword id="KW-0328">Glycosyltransferase</keyword>
<keyword id="KW-0342">GTP-binding</keyword>
<keyword id="KW-0460">Magnesium</keyword>
<keyword id="KW-0547">Nucleotide-binding</keyword>
<keyword id="KW-1185">Reference proteome</keyword>
<keyword id="KW-0808">Transferase</keyword>
<evidence type="ECO:0000255" key="1">
    <source>
        <dbReference type="HAMAP-Rule" id="MF_01218"/>
    </source>
</evidence>
<reference key="1">
    <citation type="journal article" date="2016" name="Genome Announc.">
        <title>Complete genome sequence of Alkaliphilus metalliredigens strain QYMF, an alkaliphilic and metal-reducing bacterium isolated from borax-contaminated leachate ponds.</title>
        <authorList>
            <person name="Hwang C."/>
            <person name="Copeland A."/>
            <person name="Lucas S."/>
            <person name="Lapidus A."/>
            <person name="Barry K."/>
            <person name="Detter J.C."/>
            <person name="Glavina Del Rio T."/>
            <person name="Hammon N."/>
            <person name="Israni S."/>
            <person name="Dalin E."/>
            <person name="Tice H."/>
            <person name="Pitluck S."/>
            <person name="Chertkov O."/>
            <person name="Brettin T."/>
            <person name="Bruce D."/>
            <person name="Han C."/>
            <person name="Schmutz J."/>
            <person name="Larimer F."/>
            <person name="Land M.L."/>
            <person name="Hauser L."/>
            <person name="Kyrpides N."/>
            <person name="Mikhailova N."/>
            <person name="Ye Q."/>
            <person name="Zhou J."/>
            <person name="Richardson P."/>
            <person name="Fields M.W."/>
        </authorList>
    </citation>
    <scope>NUCLEOTIDE SEQUENCE [LARGE SCALE GENOMIC DNA]</scope>
    <source>
        <strain>QYMF</strain>
    </source>
</reference>
<name>UPP_ALKMQ</name>
<dbReference type="EC" id="2.4.2.9" evidence="1"/>
<dbReference type="EMBL" id="CP000724">
    <property type="protein sequence ID" value="ABR46569.1"/>
    <property type="molecule type" value="Genomic_DNA"/>
</dbReference>
<dbReference type="RefSeq" id="WP_011971477.1">
    <property type="nucleotide sequence ID" value="NC_009633.1"/>
</dbReference>
<dbReference type="SMR" id="A6TK51"/>
<dbReference type="STRING" id="293826.Amet_0339"/>
<dbReference type="KEGG" id="amt:Amet_0339"/>
<dbReference type="eggNOG" id="COG0035">
    <property type="taxonomic scope" value="Bacteria"/>
</dbReference>
<dbReference type="HOGENOM" id="CLU_067096_2_2_9"/>
<dbReference type="OrthoDB" id="9781675at2"/>
<dbReference type="UniPathway" id="UPA00574">
    <property type="reaction ID" value="UER00636"/>
</dbReference>
<dbReference type="Proteomes" id="UP000001572">
    <property type="component" value="Chromosome"/>
</dbReference>
<dbReference type="GO" id="GO:0005525">
    <property type="term" value="F:GTP binding"/>
    <property type="evidence" value="ECO:0007669"/>
    <property type="project" value="UniProtKB-KW"/>
</dbReference>
<dbReference type="GO" id="GO:0000287">
    <property type="term" value="F:magnesium ion binding"/>
    <property type="evidence" value="ECO:0007669"/>
    <property type="project" value="UniProtKB-UniRule"/>
</dbReference>
<dbReference type="GO" id="GO:0004845">
    <property type="term" value="F:uracil phosphoribosyltransferase activity"/>
    <property type="evidence" value="ECO:0007669"/>
    <property type="project" value="UniProtKB-UniRule"/>
</dbReference>
<dbReference type="GO" id="GO:0044206">
    <property type="term" value="P:UMP salvage"/>
    <property type="evidence" value="ECO:0007669"/>
    <property type="project" value="UniProtKB-UniRule"/>
</dbReference>
<dbReference type="GO" id="GO:0006223">
    <property type="term" value="P:uracil salvage"/>
    <property type="evidence" value="ECO:0007669"/>
    <property type="project" value="InterPro"/>
</dbReference>
<dbReference type="CDD" id="cd06223">
    <property type="entry name" value="PRTases_typeI"/>
    <property type="match status" value="1"/>
</dbReference>
<dbReference type="FunFam" id="3.40.50.2020:FF:000003">
    <property type="entry name" value="Uracil phosphoribosyltransferase"/>
    <property type="match status" value="1"/>
</dbReference>
<dbReference type="Gene3D" id="3.40.50.2020">
    <property type="match status" value="1"/>
</dbReference>
<dbReference type="HAMAP" id="MF_01218_B">
    <property type="entry name" value="Upp_B"/>
    <property type="match status" value="1"/>
</dbReference>
<dbReference type="InterPro" id="IPR000836">
    <property type="entry name" value="PRibTrfase_dom"/>
</dbReference>
<dbReference type="InterPro" id="IPR029057">
    <property type="entry name" value="PRTase-like"/>
</dbReference>
<dbReference type="InterPro" id="IPR034332">
    <property type="entry name" value="Upp_B"/>
</dbReference>
<dbReference type="InterPro" id="IPR050054">
    <property type="entry name" value="UPRTase/APRTase"/>
</dbReference>
<dbReference type="InterPro" id="IPR005765">
    <property type="entry name" value="Ura_phspho_trans"/>
</dbReference>
<dbReference type="NCBIfam" id="NF001097">
    <property type="entry name" value="PRK00129.1"/>
    <property type="match status" value="1"/>
</dbReference>
<dbReference type="NCBIfam" id="TIGR01091">
    <property type="entry name" value="upp"/>
    <property type="match status" value="1"/>
</dbReference>
<dbReference type="PANTHER" id="PTHR32315">
    <property type="entry name" value="ADENINE PHOSPHORIBOSYLTRANSFERASE"/>
    <property type="match status" value="1"/>
</dbReference>
<dbReference type="PANTHER" id="PTHR32315:SF4">
    <property type="entry name" value="URACIL PHOSPHORIBOSYLTRANSFERASE, CHLOROPLASTIC"/>
    <property type="match status" value="1"/>
</dbReference>
<dbReference type="Pfam" id="PF14681">
    <property type="entry name" value="UPRTase"/>
    <property type="match status" value="1"/>
</dbReference>
<dbReference type="SUPFAM" id="SSF53271">
    <property type="entry name" value="PRTase-like"/>
    <property type="match status" value="1"/>
</dbReference>
<gene>
    <name evidence="1" type="primary">upp</name>
    <name type="ordered locus">Amet_0339</name>
</gene>
<comment type="function">
    <text evidence="1">Catalyzes the conversion of uracil and 5-phospho-alpha-D-ribose 1-diphosphate (PRPP) to UMP and diphosphate.</text>
</comment>
<comment type="catalytic activity">
    <reaction evidence="1">
        <text>UMP + diphosphate = 5-phospho-alpha-D-ribose 1-diphosphate + uracil</text>
        <dbReference type="Rhea" id="RHEA:13017"/>
        <dbReference type="ChEBI" id="CHEBI:17568"/>
        <dbReference type="ChEBI" id="CHEBI:33019"/>
        <dbReference type="ChEBI" id="CHEBI:57865"/>
        <dbReference type="ChEBI" id="CHEBI:58017"/>
        <dbReference type="EC" id="2.4.2.9"/>
    </reaction>
</comment>
<comment type="cofactor">
    <cofactor evidence="1">
        <name>Mg(2+)</name>
        <dbReference type="ChEBI" id="CHEBI:18420"/>
    </cofactor>
    <text evidence="1">Binds 1 Mg(2+) ion per subunit. The magnesium is bound as Mg-PRPP.</text>
</comment>
<comment type="activity regulation">
    <text evidence="1">Allosterically activated by GTP.</text>
</comment>
<comment type="pathway">
    <text evidence="1">Pyrimidine metabolism; UMP biosynthesis via salvage pathway; UMP from uracil: step 1/1.</text>
</comment>
<comment type="similarity">
    <text evidence="1">Belongs to the UPRTase family.</text>
</comment>